<feature type="chain" id="PRO_0000314526" description="Ribosomal RNA large subunit methyltransferase M">
    <location>
        <begin position="1"/>
        <end position="354"/>
    </location>
</feature>
<feature type="active site" description="Proton acceptor" evidence="1">
    <location>
        <position position="300"/>
    </location>
</feature>
<feature type="binding site" evidence="1">
    <location>
        <position position="183"/>
    </location>
    <ligand>
        <name>S-adenosyl-L-methionine</name>
        <dbReference type="ChEBI" id="CHEBI:59789"/>
    </ligand>
</feature>
<feature type="binding site" evidence="1">
    <location>
        <begin position="216"/>
        <end position="219"/>
    </location>
    <ligand>
        <name>S-adenosyl-L-methionine</name>
        <dbReference type="ChEBI" id="CHEBI:59789"/>
    </ligand>
</feature>
<feature type="binding site" evidence="1">
    <location>
        <position position="235"/>
    </location>
    <ligand>
        <name>S-adenosyl-L-methionine</name>
        <dbReference type="ChEBI" id="CHEBI:59789"/>
    </ligand>
</feature>
<feature type="binding site" evidence="1">
    <location>
        <position position="255"/>
    </location>
    <ligand>
        <name>S-adenosyl-L-methionine</name>
        <dbReference type="ChEBI" id="CHEBI:59789"/>
    </ligand>
</feature>
<feature type="binding site" evidence="1">
    <location>
        <position position="271"/>
    </location>
    <ligand>
        <name>S-adenosyl-L-methionine</name>
        <dbReference type="ChEBI" id="CHEBI:59789"/>
    </ligand>
</feature>
<proteinExistence type="inferred from homology"/>
<sequence>MNTLFMHCRPGFEGEVCAEISEHAALLGVAGYAKGKPQSACAEFVCTEPDGAQRLMHELRFAQLIFPRQWARGAFVELPETDRISVLLEHLADLPVCGSLWLEVLDSNEGKELSTFCRKFEVPLRKALEKAGRLVDDARRPRLLLTFISGRRVFLGLAEADNSALWPMGIPRLKFPREAPSRSTLKLEEAWHQFIPREQWEQRLNDDMTGVDLGASPGGWTYQLVKRGMLVTAIDNGPMAESLMDTGLVTHLMADGFTWKPKHTVDWMVCDIVEKPARTASLIETWLGEGLCREAVVNLKLPMKQRHAEVRKLLDRMEAGFKERKVKVSIACKQLYHDREEVTCHLRRLDLKPH</sequence>
<accession>Q1I7B1</accession>
<comment type="function">
    <text evidence="1">Catalyzes the 2'-O-methylation at nucleotide C2498 in 23S rRNA.</text>
</comment>
<comment type="catalytic activity">
    <reaction evidence="1">
        <text>cytidine(2498) in 23S rRNA + S-adenosyl-L-methionine = 2'-O-methylcytidine(2498) in 23S rRNA + S-adenosyl-L-homocysteine + H(+)</text>
        <dbReference type="Rhea" id="RHEA:42788"/>
        <dbReference type="Rhea" id="RHEA-COMP:10244"/>
        <dbReference type="Rhea" id="RHEA-COMP:10245"/>
        <dbReference type="ChEBI" id="CHEBI:15378"/>
        <dbReference type="ChEBI" id="CHEBI:57856"/>
        <dbReference type="ChEBI" id="CHEBI:59789"/>
        <dbReference type="ChEBI" id="CHEBI:74495"/>
        <dbReference type="ChEBI" id="CHEBI:82748"/>
        <dbReference type="EC" id="2.1.1.186"/>
    </reaction>
</comment>
<comment type="subunit">
    <text evidence="1">Monomer.</text>
</comment>
<comment type="subcellular location">
    <subcellularLocation>
        <location evidence="1">Cytoplasm</location>
    </subcellularLocation>
</comment>
<comment type="similarity">
    <text evidence="1">Belongs to the class I-like SAM-binding methyltransferase superfamily. RNA methyltransferase RlmE family. RlmM subfamily.</text>
</comment>
<reference key="1">
    <citation type="journal article" date="2006" name="Nat. Biotechnol.">
        <title>Complete genome sequence of the entomopathogenic and metabolically versatile soil bacterium Pseudomonas entomophila.</title>
        <authorList>
            <person name="Vodovar N."/>
            <person name="Vallenet D."/>
            <person name="Cruveiller S."/>
            <person name="Rouy Z."/>
            <person name="Barbe V."/>
            <person name="Acosta C."/>
            <person name="Cattolico L."/>
            <person name="Jubin C."/>
            <person name="Lajus A."/>
            <person name="Segurens B."/>
            <person name="Vacherie B."/>
            <person name="Wincker P."/>
            <person name="Weissenbach J."/>
            <person name="Lemaitre B."/>
            <person name="Medigue C."/>
            <person name="Boccard F."/>
        </authorList>
    </citation>
    <scope>NUCLEOTIDE SEQUENCE [LARGE SCALE GENOMIC DNA]</scope>
    <source>
        <strain>L48</strain>
    </source>
</reference>
<name>RLMM_PSEE4</name>
<protein>
    <recommendedName>
        <fullName evidence="1">Ribosomal RNA large subunit methyltransferase M</fullName>
        <ecNumber evidence="1">2.1.1.186</ecNumber>
    </recommendedName>
    <alternativeName>
        <fullName evidence="1">23S rRNA (cytidine2498-2'-O)-methyltransferase</fullName>
    </alternativeName>
    <alternativeName>
        <fullName evidence="1">23S rRNA 2'-O-ribose methyltransferase RlmM</fullName>
    </alternativeName>
</protein>
<organism>
    <name type="scientific">Pseudomonas entomophila (strain L48)</name>
    <dbReference type="NCBI Taxonomy" id="384676"/>
    <lineage>
        <taxon>Bacteria</taxon>
        <taxon>Pseudomonadati</taxon>
        <taxon>Pseudomonadota</taxon>
        <taxon>Gammaproteobacteria</taxon>
        <taxon>Pseudomonadales</taxon>
        <taxon>Pseudomonadaceae</taxon>
        <taxon>Pseudomonas</taxon>
    </lineage>
</organism>
<keyword id="KW-0963">Cytoplasm</keyword>
<keyword id="KW-0489">Methyltransferase</keyword>
<keyword id="KW-0698">rRNA processing</keyword>
<keyword id="KW-0949">S-adenosyl-L-methionine</keyword>
<keyword id="KW-0808">Transferase</keyword>
<gene>
    <name evidence="1" type="primary">rlmM</name>
    <name type="ordered locus">PSEEN3755</name>
</gene>
<evidence type="ECO:0000255" key="1">
    <source>
        <dbReference type="HAMAP-Rule" id="MF_01551"/>
    </source>
</evidence>
<dbReference type="EC" id="2.1.1.186" evidence="1"/>
<dbReference type="EMBL" id="CT573326">
    <property type="protein sequence ID" value="CAK16471.1"/>
    <property type="molecule type" value="Genomic_DNA"/>
</dbReference>
<dbReference type="RefSeq" id="WP_011534848.1">
    <property type="nucleotide sequence ID" value="NC_008027.1"/>
</dbReference>
<dbReference type="SMR" id="Q1I7B1"/>
<dbReference type="STRING" id="384676.PSEEN3755"/>
<dbReference type="GeneID" id="32806794"/>
<dbReference type="KEGG" id="pen:PSEEN3755"/>
<dbReference type="eggNOG" id="COG2933">
    <property type="taxonomic scope" value="Bacteria"/>
</dbReference>
<dbReference type="HOGENOM" id="CLU_043780_0_0_6"/>
<dbReference type="OrthoDB" id="154490at2"/>
<dbReference type="Proteomes" id="UP000000658">
    <property type="component" value="Chromosome"/>
</dbReference>
<dbReference type="GO" id="GO:0005737">
    <property type="term" value="C:cytoplasm"/>
    <property type="evidence" value="ECO:0007669"/>
    <property type="project" value="UniProtKB-SubCell"/>
</dbReference>
<dbReference type="GO" id="GO:0008757">
    <property type="term" value="F:S-adenosylmethionine-dependent methyltransferase activity"/>
    <property type="evidence" value="ECO:0007669"/>
    <property type="project" value="UniProtKB-UniRule"/>
</dbReference>
<dbReference type="GO" id="GO:0032259">
    <property type="term" value="P:methylation"/>
    <property type="evidence" value="ECO:0007669"/>
    <property type="project" value="UniProtKB-KW"/>
</dbReference>
<dbReference type="GO" id="GO:0006364">
    <property type="term" value="P:rRNA processing"/>
    <property type="evidence" value="ECO:0007669"/>
    <property type="project" value="UniProtKB-UniRule"/>
</dbReference>
<dbReference type="Gene3D" id="3.30.2300.20">
    <property type="match status" value="1"/>
</dbReference>
<dbReference type="Gene3D" id="3.30.70.2810">
    <property type="match status" value="1"/>
</dbReference>
<dbReference type="Gene3D" id="3.40.50.150">
    <property type="entry name" value="Vaccinia Virus protein VP39"/>
    <property type="match status" value="1"/>
</dbReference>
<dbReference type="HAMAP" id="MF_01551">
    <property type="entry name" value="23SrRNA_methyltr_M"/>
    <property type="match status" value="1"/>
</dbReference>
<dbReference type="InterPro" id="IPR040739">
    <property type="entry name" value="RlmM_FDX"/>
</dbReference>
<dbReference type="InterPro" id="IPR048646">
    <property type="entry name" value="RlmM_THUMP-like"/>
</dbReference>
<dbReference type="InterPro" id="IPR002877">
    <property type="entry name" value="RNA_MeTrfase_FtsJ_dom"/>
</dbReference>
<dbReference type="InterPro" id="IPR011224">
    <property type="entry name" value="rRNA_MeTrfase_M"/>
</dbReference>
<dbReference type="InterPro" id="IPR029063">
    <property type="entry name" value="SAM-dependent_MTases_sf"/>
</dbReference>
<dbReference type="NCBIfam" id="NF008734">
    <property type="entry name" value="PRK11760.1"/>
    <property type="match status" value="1"/>
</dbReference>
<dbReference type="PANTHER" id="PTHR37524">
    <property type="entry name" value="RIBOSOMAL RNA LARGE SUBUNIT METHYLTRANSFERASE M"/>
    <property type="match status" value="1"/>
</dbReference>
<dbReference type="PANTHER" id="PTHR37524:SF2">
    <property type="entry name" value="RIBOSOMAL RNA METHYLTRANSFERASE FTSJ DOMAIN-CONTAINING PROTEIN"/>
    <property type="match status" value="1"/>
</dbReference>
<dbReference type="Pfam" id="PF01728">
    <property type="entry name" value="FtsJ"/>
    <property type="match status" value="1"/>
</dbReference>
<dbReference type="Pfam" id="PF18125">
    <property type="entry name" value="RlmM_FDX"/>
    <property type="match status" value="1"/>
</dbReference>
<dbReference type="Pfam" id="PF21239">
    <property type="entry name" value="RLMM_N"/>
    <property type="match status" value="1"/>
</dbReference>
<dbReference type="PIRSF" id="PIRSF028774">
    <property type="entry name" value="UCP028774"/>
    <property type="match status" value="1"/>
</dbReference>
<dbReference type="SUPFAM" id="SSF53335">
    <property type="entry name" value="S-adenosyl-L-methionine-dependent methyltransferases"/>
    <property type="match status" value="1"/>
</dbReference>